<protein>
    <recommendedName>
        <fullName evidence="1">Histidinol dehydrogenase</fullName>
        <shortName evidence="1">HDH</shortName>
        <ecNumber evidence="1">1.1.1.23</ecNumber>
    </recommendedName>
</protein>
<feature type="chain" id="PRO_0000229852" description="Histidinol dehydrogenase">
    <location>
        <begin position="1"/>
        <end position="445"/>
    </location>
</feature>
<feature type="active site" description="Proton acceptor" evidence="1">
    <location>
        <position position="335"/>
    </location>
</feature>
<feature type="active site" description="Proton acceptor" evidence="1">
    <location>
        <position position="336"/>
    </location>
</feature>
<feature type="binding site" evidence="1">
    <location>
        <position position="138"/>
    </location>
    <ligand>
        <name>NAD(+)</name>
        <dbReference type="ChEBI" id="CHEBI:57540"/>
    </ligand>
</feature>
<feature type="binding site" evidence="1">
    <location>
        <position position="199"/>
    </location>
    <ligand>
        <name>NAD(+)</name>
        <dbReference type="ChEBI" id="CHEBI:57540"/>
    </ligand>
</feature>
<feature type="binding site" evidence="1">
    <location>
        <position position="222"/>
    </location>
    <ligand>
        <name>NAD(+)</name>
        <dbReference type="ChEBI" id="CHEBI:57540"/>
    </ligand>
</feature>
<feature type="binding site" evidence="1">
    <location>
        <position position="245"/>
    </location>
    <ligand>
        <name>substrate</name>
    </ligand>
</feature>
<feature type="binding site" evidence="1">
    <location>
        <position position="267"/>
    </location>
    <ligand>
        <name>substrate</name>
    </ligand>
</feature>
<feature type="binding site" evidence="1">
    <location>
        <position position="267"/>
    </location>
    <ligand>
        <name>Zn(2+)</name>
        <dbReference type="ChEBI" id="CHEBI:29105"/>
    </ligand>
</feature>
<feature type="binding site" evidence="1">
    <location>
        <position position="270"/>
    </location>
    <ligand>
        <name>substrate</name>
    </ligand>
</feature>
<feature type="binding site" evidence="1">
    <location>
        <position position="270"/>
    </location>
    <ligand>
        <name>Zn(2+)</name>
        <dbReference type="ChEBI" id="CHEBI:29105"/>
    </ligand>
</feature>
<feature type="binding site" evidence="1">
    <location>
        <position position="336"/>
    </location>
    <ligand>
        <name>substrate</name>
    </ligand>
</feature>
<feature type="binding site" evidence="1">
    <location>
        <position position="369"/>
    </location>
    <ligand>
        <name>substrate</name>
    </ligand>
</feature>
<feature type="binding site" evidence="1">
    <location>
        <position position="369"/>
    </location>
    <ligand>
        <name>Zn(2+)</name>
        <dbReference type="ChEBI" id="CHEBI:29105"/>
    </ligand>
</feature>
<feature type="binding site" evidence="1">
    <location>
        <position position="423"/>
    </location>
    <ligand>
        <name>substrate</name>
    </ligand>
</feature>
<feature type="binding site" evidence="1">
    <location>
        <position position="428"/>
    </location>
    <ligand>
        <name>substrate</name>
    </ligand>
</feature>
<feature type="binding site" evidence="1">
    <location>
        <position position="428"/>
    </location>
    <ligand>
        <name>Zn(2+)</name>
        <dbReference type="ChEBI" id="CHEBI:29105"/>
    </ligand>
</feature>
<evidence type="ECO:0000255" key="1">
    <source>
        <dbReference type="HAMAP-Rule" id="MF_01024"/>
    </source>
</evidence>
<reference key="1">
    <citation type="journal article" date="2010" name="Genome Biol. Evol.">
        <title>Continuing evolution of Burkholderia mallei through genome reduction and large-scale rearrangements.</title>
        <authorList>
            <person name="Losada L."/>
            <person name="Ronning C.M."/>
            <person name="DeShazer D."/>
            <person name="Woods D."/>
            <person name="Fedorova N."/>
            <person name="Kim H.S."/>
            <person name="Shabalina S.A."/>
            <person name="Pearson T.R."/>
            <person name="Brinkac L."/>
            <person name="Tan P."/>
            <person name="Nandi T."/>
            <person name="Crabtree J."/>
            <person name="Badger J."/>
            <person name="Beckstrom-Sternberg S."/>
            <person name="Saqib M."/>
            <person name="Schutzer S.E."/>
            <person name="Keim P."/>
            <person name="Nierman W.C."/>
        </authorList>
    </citation>
    <scope>NUCLEOTIDE SEQUENCE [LARGE SCALE GENOMIC DNA]</scope>
    <source>
        <strain>1710b</strain>
    </source>
</reference>
<gene>
    <name evidence="1" type="primary">hisD</name>
    <name type="ordered locus">BURPS1710b_3693</name>
</gene>
<organism>
    <name type="scientific">Burkholderia pseudomallei (strain 1710b)</name>
    <dbReference type="NCBI Taxonomy" id="320372"/>
    <lineage>
        <taxon>Bacteria</taxon>
        <taxon>Pseudomonadati</taxon>
        <taxon>Pseudomonadota</taxon>
        <taxon>Betaproteobacteria</taxon>
        <taxon>Burkholderiales</taxon>
        <taxon>Burkholderiaceae</taxon>
        <taxon>Burkholderia</taxon>
        <taxon>pseudomallei group</taxon>
    </lineage>
</organism>
<proteinExistence type="inferred from homology"/>
<dbReference type="EC" id="1.1.1.23" evidence="1"/>
<dbReference type="EMBL" id="CP000124">
    <property type="protein sequence ID" value="ABA50269.1"/>
    <property type="molecule type" value="Genomic_DNA"/>
</dbReference>
<dbReference type="RefSeq" id="WP_004527888.1">
    <property type="nucleotide sequence ID" value="NC_007434.1"/>
</dbReference>
<dbReference type="SMR" id="Q3JMZ6"/>
<dbReference type="EnsemblBacteria" id="ABA50269">
    <property type="protein sequence ID" value="ABA50269"/>
    <property type="gene ID" value="BURPS1710b_3693"/>
</dbReference>
<dbReference type="KEGG" id="bpm:BURPS1710b_3693"/>
<dbReference type="HOGENOM" id="CLU_006732_3_3_4"/>
<dbReference type="UniPathway" id="UPA00031">
    <property type="reaction ID" value="UER00014"/>
</dbReference>
<dbReference type="Proteomes" id="UP000002700">
    <property type="component" value="Chromosome I"/>
</dbReference>
<dbReference type="GO" id="GO:0005829">
    <property type="term" value="C:cytosol"/>
    <property type="evidence" value="ECO:0007669"/>
    <property type="project" value="TreeGrafter"/>
</dbReference>
<dbReference type="GO" id="GO:0004399">
    <property type="term" value="F:histidinol dehydrogenase activity"/>
    <property type="evidence" value="ECO:0007669"/>
    <property type="project" value="UniProtKB-UniRule"/>
</dbReference>
<dbReference type="GO" id="GO:0051287">
    <property type="term" value="F:NAD binding"/>
    <property type="evidence" value="ECO:0007669"/>
    <property type="project" value="InterPro"/>
</dbReference>
<dbReference type="GO" id="GO:0008270">
    <property type="term" value="F:zinc ion binding"/>
    <property type="evidence" value="ECO:0007669"/>
    <property type="project" value="UniProtKB-UniRule"/>
</dbReference>
<dbReference type="GO" id="GO:0000105">
    <property type="term" value="P:L-histidine biosynthetic process"/>
    <property type="evidence" value="ECO:0007669"/>
    <property type="project" value="UniProtKB-UniRule"/>
</dbReference>
<dbReference type="CDD" id="cd06572">
    <property type="entry name" value="Histidinol_dh"/>
    <property type="match status" value="1"/>
</dbReference>
<dbReference type="FunFam" id="3.40.50.1980:FF:000001">
    <property type="entry name" value="Histidinol dehydrogenase"/>
    <property type="match status" value="1"/>
</dbReference>
<dbReference type="FunFam" id="3.40.50.1980:FF:000026">
    <property type="entry name" value="Histidinol dehydrogenase"/>
    <property type="match status" value="1"/>
</dbReference>
<dbReference type="Gene3D" id="1.20.5.1300">
    <property type="match status" value="1"/>
</dbReference>
<dbReference type="Gene3D" id="3.40.50.1980">
    <property type="entry name" value="Nitrogenase molybdenum iron protein domain"/>
    <property type="match status" value="2"/>
</dbReference>
<dbReference type="HAMAP" id="MF_01024">
    <property type="entry name" value="HisD"/>
    <property type="match status" value="1"/>
</dbReference>
<dbReference type="InterPro" id="IPR016161">
    <property type="entry name" value="Ald_DH/histidinol_DH"/>
</dbReference>
<dbReference type="InterPro" id="IPR001692">
    <property type="entry name" value="Histidinol_DH_CS"/>
</dbReference>
<dbReference type="InterPro" id="IPR022695">
    <property type="entry name" value="Histidinol_DH_monofunct"/>
</dbReference>
<dbReference type="InterPro" id="IPR012131">
    <property type="entry name" value="Hstdl_DH"/>
</dbReference>
<dbReference type="NCBIfam" id="TIGR00069">
    <property type="entry name" value="hisD"/>
    <property type="match status" value="1"/>
</dbReference>
<dbReference type="PANTHER" id="PTHR21256:SF2">
    <property type="entry name" value="HISTIDINE BIOSYNTHESIS TRIFUNCTIONAL PROTEIN"/>
    <property type="match status" value="1"/>
</dbReference>
<dbReference type="PANTHER" id="PTHR21256">
    <property type="entry name" value="HISTIDINOL DEHYDROGENASE HDH"/>
    <property type="match status" value="1"/>
</dbReference>
<dbReference type="Pfam" id="PF00815">
    <property type="entry name" value="Histidinol_dh"/>
    <property type="match status" value="1"/>
</dbReference>
<dbReference type="PIRSF" id="PIRSF000099">
    <property type="entry name" value="Histidinol_dh"/>
    <property type="match status" value="1"/>
</dbReference>
<dbReference type="PRINTS" id="PR00083">
    <property type="entry name" value="HOLDHDRGNASE"/>
</dbReference>
<dbReference type="SUPFAM" id="SSF53720">
    <property type="entry name" value="ALDH-like"/>
    <property type="match status" value="1"/>
</dbReference>
<dbReference type="PROSITE" id="PS00611">
    <property type="entry name" value="HISOL_DEHYDROGENASE"/>
    <property type="match status" value="1"/>
</dbReference>
<name>HISX_BURP1</name>
<sequence length="445" mass="47363">MAIKIRKLDSTSEGFAAELRAVLAFEASEDDAIERAVAQILADVKARGDAAVLDYTNRFDRLNAASVAALELPQSELEAALEGLEPKRRAALEAAAARVRGYHEKQKIECGSHSWQYTEADGTVLGQKVTPLDRVGLYVPGGKAAYPSSVLMNAIPARVAGVGEIVMVVPTPDGLKNDLVLAAALLGGVDRVFTIGGAQAVAALAYGTQTVPAVDKICGPGNAYVASAKRRVFGTVGIDMIAGPSEILVLCDGTTDPSWVAMDLFSQAEHDELAQSILLCPDEAFIERVEKAIGELLPTMPRQDVIRASLEGRGALVKVRDMAEACRIANDIAPEHLEISALEPHQWGKQIRHAGAIFLGRYTSESLGDYCAGPNHVLPTSRTARFSSPLGVYDFFKRSSLIEVSAEGAHTLGEIASELAYGEGLQAHAKSAEYRMKGAGDRQKG</sequence>
<keyword id="KW-0028">Amino-acid biosynthesis</keyword>
<keyword id="KW-0368">Histidine biosynthesis</keyword>
<keyword id="KW-0479">Metal-binding</keyword>
<keyword id="KW-0520">NAD</keyword>
<keyword id="KW-0560">Oxidoreductase</keyword>
<keyword id="KW-0862">Zinc</keyword>
<comment type="function">
    <text evidence="1">Catalyzes the sequential NAD-dependent oxidations of L-histidinol to L-histidinaldehyde and then to L-histidine.</text>
</comment>
<comment type="catalytic activity">
    <reaction evidence="1">
        <text>L-histidinol + 2 NAD(+) + H2O = L-histidine + 2 NADH + 3 H(+)</text>
        <dbReference type="Rhea" id="RHEA:20641"/>
        <dbReference type="ChEBI" id="CHEBI:15377"/>
        <dbReference type="ChEBI" id="CHEBI:15378"/>
        <dbReference type="ChEBI" id="CHEBI:57540"/>
        <dbReference type="ChEBI" id="CHEBI:57595"/>
        <dbReference type="ChEBI" id="CHEBI:57699"/>
        <dbReference type="ChEBI" id="CHEBI:57945"/>
        <dbReference type="EC" id="1.1.1.23"/>
    </reaction>
</comment>
<comment type="cofactor">
    <cofactor evidence="1">
        <name>Zn(2+)</name>
        <dbReference type="ChEBI" id="CHEBI:29105"/>
    </cofactor>
    <text evidence="1">Binds 1 zinc ion per subunit.</text>
</comment>
<comment type="pathway">
    <text evidence="1">Amino-acid biosynthesis; L-histidine biosynthesis; L-histidine from 5-phospho-alpha-D-ribose 1-diphosphate: step 9/9.</text>
</comment>
<comment type="similarity">
    <text evidence="1">Belongs to the histidinol dehydrogenase family.</text>
</comment>
<accession>Q3JMZ6</accession>